<name>KAD6C_ARATH</name>
<dbReference type="EC" id="2.7.4.3"/>
<dbReference type="EMBL" id="AC004697">
    <property type="status" value="NOT_ANNOTATED_CDS"/>
    <property type="molecule type" value="Genomic_DNA"/>
</dbReference>
<dbReference type="EMBL" id="CP002685">
    <property type="protein sequence ID" value="AEC09652.1"/>
    <property type="molecule type" value="Genomic_DNA"/>
</dbReference>
<dbReference type="EMBL" id="BT002887">
    <property type="protein sequence ID" value="AAO22704.1"/>
    <property type="molecule type" value="mRNA"/>
</dbReference>
<dbReference type="EMBL" id="BT004398">
    <property type="protein sequence ID" value="AAO42392.1"/>
    <property type="molecule type" value="mRNA"/>
</dbReference>
<dbReference type="PIR" id="T02575">
    <property type="entry name" value="T02575"/>
</dbReference>
<dbReference type="RefSeq" id="NP_850314.1">
    <property type="nucleotide sequence ID" value="NM_179983.4"/>
</dbReference>
<dbReference type="SMR" id="Q84JF7"/>
<dbReference type="FunCoup" id="Q84JF7">
    <property type="interactions" value="340"/>
</dbReference>
<dbReference type="STRING" id="3702.Q84JF7"/>
<dbReference type="PaxDb" id="3702-AT2G39270.1"/>
<dbReference type="ProteomicsDB" id="232241"/>
<dbReference type="EnsemblPlants" id="AT2G39270.1">
    <property type="protein sequence ID" value="AT2G39270.1"/>
    <property type="gene ID" value="AT2G39270"/>
</dbReference>
<dbReference type="GeneID" id="818512"/>
<dbReference type="Gramene" id="AT2G39270.1">
    <property type="protein sequence ID" value="AT2G39270.1"/>
    <property type="gene ID" value="AT2G39270"/>
</dbReference>
<dbReference type="KEGG" id="ath:AT2G39270"/>
<dbReference type="Araport" id="AT2G39270"/>
<dbReference type="TAIR" id="AT2G39270"/>
<dbReference type="eggNOG" id="KOG3078">
    <property type="taxonomic scope" value="Eukaryota"/>
</dbReference>
<dbReference type="HOGENOM" id="CLU_032354_2_2_1"/>
<dbReference type="InParanoid" id="Q84JF7"/>
<dbReference type="OMA" id="FFKNSNC"/>
<dbReference type="OrthoDB" id="439792at2759"/>
<dbReference type="PhylomeDB" id="Q84JF7"/>
<dbReference type="BioCyc" id="ARA:AT2G39270-MONOMER"/>
<dbReference type="PRO" id="PR:Q84JF7"/>
<dbReference type="Proteomes" id="UP000006548">
    <property type="component" value="Chromosome 2"/>
</dbReference>
<dbReference type="ExpressionAtlas" id="Q84JF7">
    <property type="expression patterns" value="baseline and differential"/>
</dbReference>
<dbReference type="GO" id="GO:0009507">
    <property type="term" value="C:chloroplast"/>
    <property type="evidence" value="ECO:0007669"/>
    <property type="project" value="UniProtKB-SubCell"/>
</dbReference>
<dbReference type="GO" id="GO:0004017">
    <property type="term" value="F:adenylate kinase activity"/>
    <property type="evidence" value="ECO:0007669"/>
    <property type="project" value="UniProtKB-EC"/>
</dbReference>
<dbReference type="GO" id="GO:0005524">
    <property type="term" value="F:ATP binding"/>
    <property type="evidence" value="ECO:0007669"/>
    <property type="project" value="UniProtKB-KW"/>
</dbReference>
<dbReference type="CDD" id="cd01428">
    <property type="entry name" value="ADK"/>
    <property type="match status" value="1"/>
</dbReference>
<dbReference type="Gene3D" id="3.40.50.300">
    <property type="entry name" value="P-loop containing nucleotide triphosphate hydrolases"/>
    <property type="match status" value="1"/>
</dbReference>
<dbReference type="HAMAP" id="MF_00235">
    <property type="entry name" value="Adenylate_kinase_Adk"/>
    <property type="match status" value="1"/>
</dbReference>
<dbReference type="InterPro" id="IPR006259">
    <property type="entry name" value="Adenyl_kin_sub"/>
</dbReference>
<dbReference type="InterPro" id="IPR000850">
    <property type="entry name" value="Adenylat/UMP-CMP_kin"/>
</dbReference>
<dbReference type="InterPro" id="IPR033690">
    <property type="entry name" value="Adenylat_kinase_CS"/>
</dbReference>
<dbReference type="InterPro" id="IPR027417">
    <property type="entry name" value="P-loop_NTPase"/>
</dbReference>
<dbReference type="NCBIfam" id="TIGR01351">
    <property type="entry name" value="adk"/>
    <property type="match status" value="1"/>
</dbReference>
<dbReference type="PANTHER" id="PTHR23359">
    <property type="entry name" value="NUCLEOTIDE KINASE"/>
    <property type="match status" value="1"/>
</dbReference>
<dbReference type="Pfam" id="PF00406">
    <property type="entry name" value="ADK"/>
    <property type="match status" value="1"/>
</dbReference>
<dbReference type="PRINTS" id="PR00094">
    <property type="entry name" value="ADENYLTKNASE"/>
</dbReference>
<dbReference type="SUPFAM" id="SSF52540">
    <property type="entry name" value="P-loop containing nucleoside triphosphate hydrolases"/>
    <property type="match status" value="1"/>
</dbReference>
<dbReference type="PROSITE" id="PS00113">
    <property type="entry name" value="ADENYLATE_KINASE"/>
    <property type="match status" value="1"/>
</dbReference>
<proteinExistence type="evidence at transcript level"/>
<feature type="transit peptide" description="Chloroplast" evidence="2">
    <location>
        <begin position="1"/>
        <end position="46"/>
    </location>
</feature>
<feature type="chain" id="PRO_0000425982" description="Probable adenylate kinase 6, chloroplastic">
    <location>
        <begin position="47"/>
        <end position="295"/>
    </location>
</feature>
<feature type="region of interest" description="NMP" evidence="1">
    <location>
        <begin position="94"/>
        <end position="123"/>
    </location>
</feature>
<feature type="region of interest" description="LID" evidence="1">
    <location>
        <begin position="187"/>
        <end position="235"/>
    </location>
</feature>
<feature type="binding site" evidence="1">
    <location>
        <begin position="74"/>
        <end position="79"/>
    </location>
    <ligand>
        <name>ATP</name>
        <dbReference type="ChEBI" id="CHEBI:30616"/>
    </ligand>
</feature>
<feature type="binding site" evidence="1">
    <location>
        <position position="95"/>
    </location>
    <ligand>
        <name>AMP</name>
        <dbReference type="ChEBI" id="CHEBI:456215"/>
    </ligand>
</feature>
<feature type="binding site" evidence="1">
    <location>
        <position position="100"/>
    </location>
    <ligand>
        <name>AMP</name>
        <dbReference type="ChEBI" id="CHEBI:456215"/>
    </ligand>
</feature>
<feature type="binding site" evidence="1">
    <location>
        <begin position="121"/>
        <end position="123"/>
    </location>
    <ligand>
        <name>AMP</name>
        <dbReference type="ChEBI" id="CHEBI:456215"/>
    </ligand>
</feature>
<feature type="binding site" evidence="1">
    <location>
        <begin position="151"/>
        <end position="154"/>
    </location>
    <ligand>
        <name>AMP</name>
        <dbReference type="ChEBI" id="CHEBI:456215"/>
    </ligand>
</feature>
<feature type="binding site" evidence="1">
    <location>
        <position position="158"/>
    </location>
    <ligand>
        <name>AMP</name>
        <dbReference type="ChEBI" id="CHEBI:456215"/>
    </ligand>
</feature>
<feature type="binding site" evidence="1">
    <location>
        <position position="188"/>
    </location>
    <ligand>
        <name>ATP</name>
        <dbReference type="ChEBI" id="CHEBI:30616"/>
    </ligand>
</feature>
<feature type="binding site" evidence="1">
    <location>
        <position position="243"/>
    </location>
    <ligand>
        <name>AMP</name>
        <dbReference type="ChEBI" id="CHEBI:456215"/>
    </ligand>
</feature>
<feature type="binding site" evidence="1">
    <location>
        <position position="271"/>
    </location>
    <ligand>
        <name>ATP</name>
        <dbReference type="ChEBI" id="CHEBI:30616"/>
    </ligand>
</feature>
<accession>Q84JF7</accession>
<keyword id="KW-0067">ATP-binding</keyword>
<keyword id="KW-0150">Chloroplast</keyword>
<keyword id="KW-0418">Kinase</keyword>
<keyword id="KW-0547">Nucleotide-binding</keyword>
<keyword id="KW-0934">Plastid</keyword>
<keyword id="KW-1185">Reference proteome</keyword>
<keyword id="KW-0808">Transferase</keyword>
<keyword id="KW-0809">Transit peptide</keyword>
<reference key="1">
    <citation type="journal article" date="1999" name="Nature">
        <title>Sequence and analysis of chromosome 2 of the plant Arabidopsis thaliana.</title>
        <authorList>
            <person name="Lin X."/>
            <person name="Kaul S."/>
            <person name="Rounsley S.D."/>
            <person name="Shea T.P."/>
            <person name="Benito M.-I."/>
            <person name="Town C.D."/>
            <person name="Fujii C.Y."/>
            <person name="Mason T.M."/>
            <person name="Bowman C.L."/>
            <person name="Barnstead M.E."/>
            <person name="Feldblyum T.V."/>
            <person name="Buell C.R."/>
            <person name="Ketchum K.A."/>
            <person name="Lee J.J."/>
            <person name="Ronning C.M."/>
            <person name="Koo H.L."/>
            <person name="Moffat K.S."/>
            <person name="Cronin L.A."/>
            <person name="Shen M."/>
            <person name="Pai G."/>
            <person name="Van Aken S."/>
            <person name="Umayam L."/>
            <person name="Tallon L.J."/>
            <person name="Gill J.E."/>
            <person name="Adams M.D."/>
            <person name="Carrera A.J."/>
            <person name="Creasy T.H."/>
            <person name="Goodman H.M."/>
            <person name="Somerville C.R."/>
            <person name="Copenhaver G.P."/>
            <person name="Preuss D."/>
            <person name="Nierman W.C."/>
            <person name="White O."/>
            <person name="Eisen J.A."/>
            <person name="Salzberg S.L."/>
            <person name="Fraser C.M."/>
            <person name="Venter J.C."/>
        </authorList>
    </citation>
    <scope>NUCLEOTIDE SEQUENCE [LARGE SCALE GENOMIC DNA]</scope>
    <source>
        <strain>cv. Columbia</strain>
    </source>
</reference>
<reference key="2">
    <citation type="journal article" date="2017" name="Plant J.">
        <title>Araport11: a complete reannotation of the Arabidopsis thaliana reference genome.</title>
        <authorList>
            <person name="Cheng C.Y."/>
            <person name="Krishnakumar V."/>
            <person name="Chan A.P."/>
            <person name="Thibaud-Nissen F."/>
            <person name="Schobel S."/>
            <person name="Town C.D."/>
        </authorList>
    </citation>
    <scope>GENOME REANNOTATION</scope>
    <source>
        <strain>cv. Columbia</strain>
    </source>
</reference>
<reference key="3">
    <citation type="journal article" date="2003" name="Science">
        <title>Empirical analysis of transcriptional activity in the Arabidopsis genome.</title>
        <authorList>
            <person name="Yamada K."/>
            <person name="Lim J."/>
            <person name="Dale J.M."/>
            <person name="Chen H."/>
            <person name="Shinn P."/>
            <person name="Palm C.J."/>
            <person name="Southwick A.M."/>
            <person name="Wu H.C."/>
            <person name="Kim C.J."/>
            <person name="Nguyen M."/>
            <person name="Pham P.K."/>
            <person name="Cheuk R.F."/>
            <person name="Karlin-Newmann G."/>
            <person name="Liu S.X."/>
            <person name="Lam B."/>
            <person name="Sakano H."/>
            <person name="Wu T."/>
            <person name="Yu G."/>
            <person name="Miranda M."/>
            <person name="Quach H.L."/>
            <person name="Tripp M."/>
            <person name="Chang C.H."/>
            <person name="Lee J.M."/>
            <person name="Toriumi M.J."/>
            <person name="Chan M.M."/>
            <person name="Tang C.C."/>
            <person name="Onodera C.S."/>
            <person name="Deng J.M."/>
            <person name="Akiyama K."/>
            <person name="Ansari Y."/>
            <person name="Arakawa T."/>
            <person name="Banh J."/>
            <person name="Banno F."/>
            <person name="Bowser L."/>
            <person name="Brooks S.Y."/>
            <person name="Carninci P."/>
            <person name="Chao Q."/>
            <person name="Choy N."/>
            <person name="Enju A."/>
            <person name="Goldsmith A.D."/>
            <person name="Gurjal M."/>
            <person name="Hansen N.F."/>
            <person name="Hayashizaki Y."/>
            <person name="Johnson-Hopson C."/>
            <person name="Hsuan V.W."/>
            <person name="Iida K."/>
            <person name="Karnes M."/>
            <person name="Khan S."/>
            <person name="Koesema E."/>
            <person name="Ishida J."/>
            <person name="Jiang P.X."/>
            <person name="Jones T."/>
            <person name="Kawai J."/>
            <person name="Kamiya A."/>
            <person name="Meyers C."/>
            <person name="Nakajima M."/>
            <person name="Narusaka M."/>
            <person name="Seki M."/>
            <person name="Sakurai T."/>
            <person name="Satou M."/>
            <person name="Tamse R."/>
            <person name="Vaysberg M."/>
            <person name="Wallender E.K."/>
            <person name="Wong C."/>
            <person name="Yamamura Y."/>
            <person name="Yuan S."/>
            <person name="Shinozaki K."/>
            <person name="Davis R.W."/>
            <person name="Theologis A."/>
            <person name="Ecker J.R."/>
        </authorList>
    </citation>
    <scope>NUCLEOTIDE SEQUENCE [LARGE SCALE MRNA]</scope>
    <source>
        <strain>cv. Columbia</strain>
    </source>
</reference>
<gene>
    <name type="ordered locus">At2g39270</name>
    <name type="ORF">T16B24</name>
</gene>
<organism>
    <name type="scientific">Arabidopsis thaliana</name>
    <name type="common">Mouse-ear cress</name>
    <dbReference type="NCBI Taxonomy" id="3702"/>
    <lineage>
        <taxon>Eukaryota</taxon>
        <taxon>Viridiplantae</taxon>
        <taxon>Streptophyta</taxon>
        <taxon>Embryophyta</taxon>
        <taxon>Tracheophyta</taxon>
        <taxon>Spermatophyta</taxon>
        <taxon>Magnoliopsida</taxon>
        <taxon>eudicotyledons</taxon>
        <taxon>Gunneridae</taxon>
        <taxon>Pentapetalae</taxon>
        <taxon>rosids</taxon>
        <taxon>malvids</taxon>
        <taxon>Brassicales</taxon>
        <taxon>Brassicaceae</taxon>
        <taxon>Camelineae</taxon>
        <taxon>Arabidopsis</taxon>
    </lineage>
</organism>
<comment type="function">
    <text evidence="1">Catalyzes the reversible transfer of the terminal phosphate group between ATP and AMP. Plays an important role in cellular energy homeostasis and in adenine nucleotide metabolism.</text>
</comment>
<comment type="catalytic activity">
    <reaction evidence="1">
        <text>AMP + ATP = 2 ADP</text>
        <dbReference type="Rhea" id="RHEA:12973"/>
        <dbReference type="ChEBI" id="CHEBI:30616"/>
        <dbReference type="ChEBI" id="CHEBI:456215"/>
        <dbReference type="ChEBI" id="CHEBI:456216"/>
        <dbReference type="EC" id="2.7.4.3"/>
    </reaction>
</comment>
<comment type="subunit">
    <text evidence="1">Monomer.</text>
</comment>
<comment type="subcellular location">
    <subcellularLocation>
        <location evidence="3">Plastid</location>
        <location evidence="3">Chloroplast</location>
    </subcellularLocation>
</comment>
<comment type="similarity">
    <text evidence="3">Belongs to the adenylate kinase family.</text>
</comment>
<evidence type="ECO:0000250" key="1">
    <source>
        <dbReference type="UniProtKB" id="P69441"/>
    </source>
</evidence>
<evidence type="ECO:0000255" key="2"/>
<evidence type="ECO:0000305" key="3"/>
<sequence length="295" mass="32391">MAVSHRLLRPATTTIKNTFSSLFIRSLSSSSSGSSLDPKIDLEEAAAQLGKSSSTSTSPYKGRNFHWVFLGCPGVGKGTYASRLSSLLGVPHIATGDLVREELSSSGLLSSQLKELVNHGKLVPDEFIISLLSKRLQAGKDKGESGYILDGFPRTVTQAEILEGVTNIDLVINLKLREEALLAKCLGRRICSECGGNYNVACIDIKGDDDTPRMYMPPLLPPPNCESKLISRADDTEEVVKERLRIYNKMTQPVEEFYKKRGKLLEFELPGGIPESWARLLRALHLEDDKQSAIA</sequence>
<protein>
    <recommendedName>
        <fullName>Probable adenylate kinase 6, chloroplastic</fullName>
        <ecNumber>2.7.4.3</ecNumber>
    </recommendedName>
    <alternativeName>
        <fullName>ATP-AMP transphosphorylase 6</fullName>
    </alternativeName>
    <alternativeName>
        <fullName>ATP:AMP phosphotransferase</fullName>
    </alternativeName>
    <alternativeName>
        <fullName>Adenylate monophosphate kinase 6</fullName>
        <shortName>AMK6</shortName>
    </alternativeName>
</protein>